<feature type="chain" id="PRO_0000283226" description="Putative F-box/kelch-repeat protein At3g22870">
    <location>
        <begin position="1"/>
        <end position="413"/>
    </location>
</feature>
<feature type="domain" description="F-box" evidence="1">
    <location>
        <begin position="2"/>
        <end position="53"/>
    </location>
</feature>
<feature type="repeat" description="Kelch 1">
    <location>
        <begin position="156"/>
        <end position="202"/>
    </location>
</feature>
<feature type="repeat" description="Kelch 2">
    <location>
        <begin position="331"/>
        <end position="379"/>
    </location>
</feature>
<protein>
    <recommendedName>
        <fullName>Putative F-box/kelch-repeat protein At3g22870</fullName>
    </recommendedName>
</protein>
<evidence type="ECO:0000255" key="1">
    <source>
        <dbReference type="PROSITE-ProRule" id="PRU00080"/>
    </source>
</evidence>
<reference key="1">
    <citation type="journal article" date="2000" name="DNA Res.">
        <title>Structural analysis of Arabidopsis thaliana chromosome 3. II. Sequence features of the 4,251,695 bp regions covered by 90 P1, TAC and BAC clones.</title>
        <authorList>
            <person name="Kaneko T."/>
            <person name="Katoh T."/>
            <person name="Sato S."/>
            <person name="Nakamura Y."/>
            <person name="Asamizu E."/>
            <person name="Tabata S."/>
        </authorList>
    </citation>
    <scope>NUCLEOTIDE SEQUENCE [LARGE SCALE GENOMIC DNA]</scope>
    <source>
        <strain>cv. Columbia</strain>
    </source>
</reference>
<reference key="2">
    <citation type="journal article" date="2017" name="Plant J.">
        <title>Araport11: a complete reannotation of the Arabidopsis thaliana reference genome.</title>
        <authorList>
            <person name="Cheng C.Y."/>
            <person name="Krishnakumar V."/>
            <person name="Chan A.P."/>
            <person name="Thibaud-Nissen F."/>
            <person name="Schobel S."/>
            <person name="Town C.D."/>
        </authorList>
    </citation>
    <scope>GENOME REANNOTATION</scope>
    <source>
        <strain>cv. Columbia</strain>
    </source>
</reference>
<gene>
    <name type="ordered locus">At3g22870</name>
    <name type="ORF">F5N5.4</name>
</gene>
<proteinExistence type="predicted"/>
<sequence>MTLTISDLPRDLKKKIFSRIPLRYVRALRLTCKEWETLIKSRSLKIDEEESQMVALMDYNLCLMSKSFNGGDPSTEIKGKLTCFDEQVKVSMLFHCEGLLLCILKDDNTKVVVWNPYLGQRRFIQVRFSHIPGGWDQFSYALGYYKNNNMMKSFKLLRFFDYFYTSNDFVFYEIYDFDSGLWKTLDVTPYWRIRFFDDIGVSLKGNTYWCAKERKPEWNADPFIIVDHIICFDFTSERFGPLVPLPFRAMKESLVTLSCVREEKLAALFCRDVVVEVWITTTIEFDKVSWSKFLTFGVRDCPMIYSCTGSFFIDEVNKVAVIFGQPLKRDKVFIIGEAGQVRDVDLGEPAHQDSWLYVCPYVPSLVKIKQPPGCKRRRQSSSENRRYKRNMMRLVELEKYHIAMEPKRGDKTI</sequence>
<name>FBK66_ARATH</name>
<accession>Q9LIL1</accession>
<keyword id="KW-0880">Kelch repeat</keyword>
<keyword id="KW-1185">Reference proteome</keyword>
<keyword id="KW-0677">Repeat</keyword>
<dbReference type="EMBL" id="AP001300">
    <property type="protein sequence ID" value="BAB03032.1"/>
    <property type="molecule type" value="Genomic_DNA"/>
</dbReference>
<dbReference type="EMBL" id="CP002686">
    <property type="protein sequence ID" value="AEE76686.1"/>
    <property type="molecule type" value="Genomic_DNA"/>
</dbReference>
<dbReference type="RefSeq" id="NP_188927.1">
    <property type="nucleotide sequence ID" value="NM_113187.1"/>
</dbReference>
<dbReference type="FunCoup" id="Q9LIL1">
    <property type="interactions" value="1"/>
</dbReference>
<dbReference type="STRING" id="3702.Q9LIL1"/>
<dbReference type="PaxDb" id="3702-AT3G22870.1"/>
<dbReference type="EnsemblPlants" id="AT3G22870.1">
    <property type="protein sequence ID" value="AT3G22870.1"/>
    <property type="gene ID" value="AT3G22870"/>
</dbReference>
<dbReference type="GeneID" id="821859"/>
<dbReference type="Gramene" id="AT3G22870.1">
    <property type="protein sequence ID" value="AT3G22870.1"/>
    <property type="gene ID" value="AT3G22870"/>
</dbReference>
<dbReference type="KEGG" id="ath:AT3G22870"/>
<dbReference type="Araport" id="AT3G22870"/>
<dbReference type="TAIR" id="AT3G22870"/>
<dbReference type="HOGENOM" id="CLU_034692_0_0_1"/>
<dbReference type="InParanoid" id="Q9LIL1"/>
<dbReference type="OMA" id="LTCKEWE"/>
<dbReference type="PhylomeDB" id="Q9LIL1"/>
<dbReference type="PRO" id="PR:Q9LIL1"/>
<dbReference type="Proteomes" id="UP000006548">
    <property type="component" value="Chromosome 3"/>
</dbReference>
<dbReference type="ExpressionAtlas" id="Q9LIL1">
    <property type="expression patterns" value="baseline and differential"/>
</dbReference>
<dbReference type="Gene3D" id="1.20.1280.50">
    <property type="match status" value="1"/>
</dbReference>
<dbReference type="InterPro" id="IPR006527">
    <property type="entry name" value="F-box-assoc_dom_typ1"/>
</dbReference>
<dbReference type="InterPro" id="IPR017451">
    <property type="entry name" value="F-box-assoc_interact_dom"/>
</dbReference>
<dbReference type="InterPro" id="IPR036047">
    <property type="entry name" value="F-box-like_dom_sf"/>
</dbReference>
<dbReference type="InterPro" id="IPR001810">
    <property type="entry name" value="F-box_dom"/>
</dbReference>
<dbReference type="InterPro" id="IPR011043">
    <property type="entry name" value="Gal_Oxase/kelch_b-propeller"/>
</dbReference>
<dbReference type="InterPro" id="IPR050796">
    <property type="entry name" value="SCF_F-box_component"/>
</dbReference>
<dbReference type="NCBIfam" id="TIGR01640">
    <property type="entry name" value="F_box_assoc_1"/>
    <property type="match status" value="1"/>
</dbReference>
<dbReference type="PANTHER" id="PTHR31672">
    <property type="entry name" value="BNACNNG10540D PROTEIN"/>
    <property type="match status" value="1"/>
</dbReference>
<dbReference type="PANTHER" id="PTHR31672:SF13">
    <property type="entry name" value="F-BOX PROTEIN CPR30-LIKE"/>
    <property type="match status" value="1"/>
</dbReference>
<dbReference type="Pfam" id="PF00646">
    <property type="entry name" value="F-box"/>
    <property type="match status" value="1"/>
</dbReference>
<dbReference type="Pfam" id="PF07734">
    <property type="entry name" value="FBA_1"/>
    <property type="match status" value="1"/>
</dbReference>
<dbReference type="SMART" id="SM00256">
    <property type="entry name" value="FBOX"/>
    <property type="match status" value="1"/>
</dbReference>
<dbReference type="SUPFAM" id="SSF81383">
    <property type="entry name" value="F-box domain"/>
    <property type="match status" value="1"/>
</dbReference>
<dbReference type="SUPFAM" id="SSF50965">
    <property type="entry name" value="Galactose oxidase, central domain"/>
    <property type="match status" value="1"/>
</dbReference>
<dbReference type="PROSITE" id="PS50181">
    <property type="entry name" value="FBOX"/>
    <property type="match status" value="1"/>
</dbReference>
<organism>
    <name type="scientific">Arabidopsis thaliana</name>
    <name type="common">Mouse-ear cress</name>
    <dbReference type="NCBI Taxonomy" id="3702"/>
    <lineage>
        <taxon>Eukaryota</taxon>
        <taxon>Viridiplantae</taxon>
        <taxon>Streptophyta</taxon>
        <taxon>Embryophyta</taxon>
        <taxon>Tracheophyta</taxon>
        <taxon>Spermatophyta</taxon>
        <taxon>Magnoliopsida</taxon>
        <taxon>eudicotyledons</taxon>
        <taxon>Gunneridae</taxon>
        <taxon>Pentapetalae</taxon>
        <taxon>rosids</taxon>
        <taxon>malvids</taxon>
        <taxon>Brassicales</taxon>
        <taxon>Brassicaceae</taxon>
        <taxon>Camelineae</taxon>
        <taxon>Arabidopsis</taxon>
    </lineage>
</organism>